<feature type="signal peptide" evidence="2">
    <location>
        <begin position="1"/>
        <end position="20"/>
    </location>
</feature>
<feature type="chain" id="PRO_0000331281" description="FK506-binding protein 2">
    <location>
        <begin position="21"/>
        <end position="133"/>
    </location>
</feature>
<feature type="domain" description="PPIase FKBP-type" evidence="3">
    <location>
        <begin position="45"/>
        <end position="133"/>
    </location>
</feature>
<proteinExistence type="inferred from homology"/>
<reference key="1">
    <citation type="journal article" date="2005" name="Nature">
        <title>The genome of the social amoeba Dictyostelium discoideum.</title>
        <authorList>
            <person name="Eichinger L."/>
            <person name="Pachebat J.A."/>
            <person name="Gloeckner G."/>
            <person name="Rajandream M.A."/>
            <person name="Sucgang R."/>
            <person name="Berriman M."/>
            <person name="Song J."/>
            <person name="Olsen R."/>
            <person name="Szafranski K."/>
            <person name="Xu Q."/>
            <person name="Tunggal B."/>
            <person name="Kummerfeld S."/>
            <person name="Madera M."/>
            <person name="Konfortov B.A."/>
            <person name="Rivero F."/>
            <person name="Bankier A.T."/>
            <person name="Lehmann R."/>
            <person name="Hamlin N."/>
            <person name="Davies R."/>
            <person name="Gaudet P."/>
            <person name="Fey P."/>
            <person name="Pilcher K."/>
            <person name="Chen G."/>
            <person name="Saunders D."/>
            <person name="Sodergren E.J."/>
            <person name="Davis P."/>
            <person name="Kerhornou A."/>
            <person name="Nie X."/>
            <person name="Hall N."/>
            <person name="Anjard C."/>
            <person name="Hemphill L."/>
            <person name="Bason N."/>
            <person name="Farbrother P."/>
            <person name="Desany B."/>
            <person name="Just E."/>
            <person name="Morio T."/>
            <person name="Rost R."/>
            <person name="Churcher C.M."/>
            <person name="Cooper J."/>
            <person name="Haydock S."/>
            <person name="van Driessche N."/>
            <person name="Cronin A."/>
            <person name="Goodhead I."/>
            <person name="Muzny D.M."/>
            <person name="Mourier T."/>
            <person name="Pain A."/>
            <person name="Lu M."/>
            <person name="Harper D."/>
            <person name="Lindsay R."/>
            <person name="Hauser H."/>
            <person name="James K.D."/>
            <person name="Quiles M."/>
            <person name="Madan Babu M."/>
            <person name="Saito T."/>
            <person name="Buchrieser C."/>
            <person name="Wardroper A."/>
            <person name="Felder M."/>
            <person name="Thangavelu M."/>
            <person name="Johnson D."/>
            <person name="Knights A."/>
            <person name="Loulseged H."/>
            <person name="Mungall K.L."/>
            <person name="Oliver K."/>
            <person name="Price C."/>
            <person name="Quail M.A."/>
            <person name="Urushihara H."/>
            <person name="Hernandez J."/>
            <person name="Rabbinowitsch E."/>
            <person name="Steffen D."/>
            <person name="Sanders M."/>
            <person name="Ma J."/>
            <person name="Kohara Y."/>
            <person name="Sharp S."/>
            <person name="Simmonds M.N."/>
            <person name="Spiegler S."/>
            <person name="Tivey A."/>
            <person name="Sugano S."/>
            <person name="White B."/>
            <person name="Walker D."/>
            <person name="Woodward J.R."/>
            <person name="Winckler T."/>
            <person name="Tanaka Y."/>
            <person name="Shaulsky G."/>
            <person name="Schleicher M."/>
            <person name="Weinstock G.M."/>
            <person name="Rosenthal A."/>
            <person name="Cox E.C."/>
            <person name="Chisholm R.L."/>
            <person name="Gibbs R.A."/>
            <person name="Loomis W.F."/>
            <person name="Platzer M."/>
            <person name="Kay R.R."/>
            <person name="Williams J.G."/>
            <person name="Dear P.H."/>
            <person name="Noegel A.A."/>
            <person name="Barrell B.G."/>
            <person name="Kuspa A."/>
        </authorList>
    </citation>
    <scope>NUCLEOTIDE SEQUENCE [LARGE SCALE GENOMIC DNA]</scope>
    <source>
        <strain>AX4</strain>
    </source>
</reference>
<comment type="function">
    <text evidence="1">PPIases accelerate the folding of proteins by catalyzing the cis-trans isomerization of proline imidic peptide bonds in oligopeptides.</text>
</comment>
<comment type="catalytic activity">
    <reaction>
        <text>[protein]-peptidylproline (omega=180) = [protein]-peptidylproline (omega=0)</text>
        <dbReference type="Rhea" id="RHEA:16237"/>
        <dbReference type="Rhea" id="RHEA-COMP:10747"/>
        <dbReference type="Rhea" id="RHEA-COMP:10748"/>
        <dbReference type="ChEBI" id="CHEBI:83833"/>
        <dbReference type="ChEBI" id="CHEBI:83834"/>
        <dbReference type="EC" id="5.2.1.8"/>
    </reaction>
</comment>
<comment type="activity regulation">
    <text evidence="1">Inhibited by both FK506 and rapamycin.</text>
</comment>
<comment type="similarity">
    <text evidence="4">Belongs to the FKBP-type PPIase family.</text>
</comment>
<gene>
    <name type="primary">fkbp2</name>
    <name type="ORF">DDB_G0282267</name>
</gene>
<name>FKBP2_DICDI</name>
<dbReference type="EC" id="5.2.1.8"/>
<dbReference type="EMBL" id="AAFI02000046">
    <property type="protein sequence ID" value="EAL66339.1"/>
    <property type="molecule type" value="Genomic_DNA"/>
</dbReference>
<dbReference type="RefSeq" id="XP_640318.1">
    <property type="nucleotide sequence ID" value="XM_635226.1"/>
</dbReference>
<dbReference type="SMR" id="Q54SR7"/>
<dbReference type="FunCoup" id="Q54SR7">
    <property type="interactions" value="294"/>
</dbReference>
<dbReference type="STRING" id="44689.Q54SR7"/>
<dbReference type="PaxDb" id="44689-DDB0233524"/>
<dbReference type="EnsemblProtists" id="EAL66339">
    <property type="protein sequence ID" value="EAL66339"/>
    <property type="gene ID" value="DDB_G0282267"/>
</dbReference>
<dbReference type="GeneID" id="8623494"/>
<dbReference type="KEGG" id="ddi:DDB_G0282267"/>
<dbReference type="dictyBase" id="DDB_G0282267"/>
<dbReference type="VEuPathDB" id="AmoebaDB:DDB_G0282267"/>
<dbReference type="eggNOG" id="KOG0549">
    <property type="taxonomic scope" value="Eukaryota"/>
</dbReference>
<dbReference type="HOGENOM" id="CLU_013615_8_2_1"/>
<dbReference type="InParanoid" id="Q54SR7"/>
<dbReference type="OMA" id="VHMHYTG"/>
<dbReference type="PhylomeDB" id="Q54SR7"/>
<dbReference type="PRO" id="PR:Q54SR7"/>
<dbReference type="Proteomes" id="UP000002195">
    <property type="component" value="Chromosome 3"/>
</dbReference>
<dbReference type="GO" id="GO:0005783">
    <property type="term" value="C:endoplasmic reticulum"/>
    <property type="evidence" value="ECO:0000318"/>
    <property type="project" value="GO_Central"/>
</dbReference>
<dbReference type="GO" id="GO:0003755">
    <property type="term" value="F:peptidyl-prolyl cis-trans isomerase activity"/>
    <property type="evidence" value="ECO:0000318"/>
    <property type="project" value="GO_Central"/>
</dbReference>
<dbReference type="GO" id="GO:0061077">
    <property type="term" value="P:chaperone-mediated protein folding"/>
    <property type="evidence" value="ECO:0007669"/>
    <property type="project" value="InterPro"/>
</dbReference>
<dbReference type="FunFam" id="3.10.50.40:FF:000006">
    <property type="entry name" value="Peptidyl-prolyl cis-trans isomerase"/>
    <property type="match status" value="1"/>
</dbReference>
<dbReference type="Gene3D" id="3.10.50.40">
    <property type="match status" value="1"/>
</dbReference>
<dbReference type="InterPro" id="IPR044609">
    <property type="entry name" value="FKBP2/11"/>
</dbReference>
<dbReference type="InterPro" id="IPR046357">
    <property type="entry name" value="PPIase_dom_sf"/>
</dbReference>
<dbReference type="InterPro" id="IPR001179">
    <property type="entry name" value="PPIase_FKBP_dom"/>
</dbReference>
<dbReference type="PANTHER" id="PTHR45779">
    <property type="entry name" value="PEPTIDYLPROLYL ISOMERASE"/>
    <property type="match status" value="1"/>
</dbReference>
<dbReference type="PANTHER" id="PTHR45779:SF7">
    <property type="entry name" value="PEPTIDYLPROLYL ISOMERASE"/>
    <property type="match status" value="1"/>
</dbReference>
<dbReference type="Pfam" id="PF00254">
    <property type="entry name" value="FKBP_C"/>
    <property type="match status" value="1"/>
</dbReference>
<dbReference type="SUPFAM" id="SSF54534">
    <property type="entry name" value="FKBP-like"/>
    <property type="match status" value="1"/>
</dbReference>
<dbReference type="PROSITE" id="PS50059">
    <property type="entry name" value="FKBP_PPIASE"/>
    <property type="match status" value="1"/>
</dbReference>
<sequence>MKLLYCLLLVILALVGLSSGAKPSDKLQIGVKYRPDECTVKTKSGDKLKIHYTGTLLNGDKFDSSVDRGTPFEFKIGVGQVIKGWDQGVLGMCVGEKRKLIIPPSLGYGQQGAGDKIPGNSHLIFDVELIGIN</sequence>
<evidence type="ECO:0000250" key="1"/>
<evidence type="ECO:0000255" key="2"/>
<evidence type="ECO:0000255" key="3">
    <source>
        <dbReference type="PROSITE-ProRule" id="PRU00277"/>
    </source>
</evidence>
<evidence type="ECO:0000305" key="4"/>
<organism>
    <name type="scientific">Dictyostelium discoideum</name>
    <name type="common">Social amoeba</name>
    <dbReference type="NCBI Taxonomy" id="44689"/>
    <lineage>
        <taxon>Eukaryota</taxon>
        <taxon>Amoebozoa</taxon>
        <taxon>Evosea</taxon>
        <taxon>Eumycetozoa</taxon>
        <taxon>Dictyostelia</taxon>
        <taxon>Dictyosteliales</taxon>
        <taxon>Dictyosteliaceae</taxon>
        <taxon>Dictyostelium</taxon>
    </lineage>
</organism>
<keyword id="KW-0413">Isomerase</keyword>
<keyword id="KW-1185">Reference proteome</keyword>
<keyword id="KW-0697">Rotamase</keyword>
<keyword id="KW-0732">Signal</keyword>
<protein>
    <recommendedName>
        <fullName>FK506-binding protein 2</fullName>
        <ecNumber>5.2.1.8</ecNumber>
    </recommendedName>
    <alternativeName>
        <fullName>Peptidyl-prolyl cis-trans isomerase</fullName>
        <shortName>PPIase</shortName>
    </alternativeName>
    <alternativeName>
        <fullName>Rotamase</fullName>
    </alternativeName>
</protein>
<accession>Q54SR7</accession>